<name>VP1_SV40</name>
<proteinExistence type="evidence at protein level"/>
<feature type="initiator methionine" description="Removed; by host">
    <location>
        <position position="1"/>
    </location>
</feature>
<feature type="chain" id="PRO_0000115028" description="Major capsid protein VP1">
    <location>
        <begin position="2"/>
        <end position="362"/>
    </location>
</feature>
<feature type="region of interest" description="Disordered" evidence="2">
    <location>
        <begin position="1"/>
        <end position="21"/>
    </location>
</feature>
<feature type="region of interest" description="C-terminal arm" evidence="9 16">
    <location>
        <begin position="302"/>
        <end position="362"/>
    </location>
</feature>
<feature type="short sequence motif" description="Bipartite nuclear localization signal" evidence="5 15">
    <location>
        <begin position="5"/>
        <end position="19"/>
    </location>
</feature>
<feature type="modified residue" description="Phosphothreonine; by host" evidence="14">
    <location>
        <position position="338"/>
    </location>
</feature>
<feature type="disulfide bond" description="Interchain" evidence="3">
    <location>
        <position position="10"/>
    </location>
</feature>
<feature type="disulfide bond" description="Interchain" evidence="3">
    <location>
        <position position="105"/>
    </location>
</feature>
<feature type="disulfide bond" description="Interchain" evidence="3">
    <location>
        <position position="208"/>
    </location>
</feature>
<feature type="sequence variant" description="In strain: 776.">
    <original>I</original>
    <variation>L</variation>
    <location>
        <position position="99"/>
    </location>
</feature>
<feature type="mutagenesis site" description="99% loss of infectivity ex vivo." evidence="7">
    <original>E</original>
    <variation>A</variation>
    <location>
        <position position="49"/>
    </location>
</feature>
<feature type="mutagenesis site" description="No effect on infectivity ex vivo." evidence="8">
    <original>C</original>
    <variation>S</variation>
    <location>
        <position position="50"/>
    </location>
</feature>
<feature type="mutagenesis site" description="99% loss of infectivity ex vivo." evidence="8">
    <original>C</original>
    <variation>S</variation>
    <location>
        <position position="88"/>
    </location>
</feature>
<feature type="mutagenesis site" description="Complete loss of infectivity ex vivo, defective in nuclear entry." evidence="11">
    <original>E</original>
    <variation>K</variation>
    <variation>R</variation>
    <location>
        <position position="158"/>
    </location>
</feature>
<feature type="mutagenesis site" description="95% loss of infectivity ex vivo." evidence="11">
    <original>E</original>
    <variation>K</variation>
    <variation>R</variation>
    <location>
        <position position="161"/>
    </location>
</feature>
<feature type="mutagenesis site" description="99% loss of infectivity ex vivo." evidence="7">
    <original>E</original>
    <variation>K</variation>
    <variation>R</variation>
    <location>
        <position position="217"/>
    </location>
</feature>
<feature type="mutagenesis site" description="Complete loss of infectivity ex vivo." evidence="10">
    <original>V</original>
    <variation>E</variation>
    <location>
        <position position="244"/>
    </location>
</feature>
<feature type="mutagenesis site" description="Complete loss of infectivity ex vivo." evidence="10">
    <original>L</original>
    <variation>E</variation>
    <location>
        <position position="246"/>
    </location>
</feature>
<feature type="mutagenesis site" description="Complete loss of infectivity ex vivo." evidence="8">
    <original>C</original>
    <variation>S</variation>
    <location>
        <position position="255"/>
    </location>
</feature>
<feature type="mutagenesis site" description="No effect on infectivity ex vivo." evidence="8">
    <original>C</original>
    <variation>S</variation>
    <location>
        <position position="268"/>
    </location>
</feature>
<feature type="mutagenesis site" description="Complete loss of infectivity ex vivo, defective in adsorbing to cells." evidence="7">
    <original>E</original>
    <variation>K</variation>
    <variation>R</variation>
    <location>
        <position position="331"/>
    </location>
</feature>
<feature type="helix" evidence="19">
    <location>
        <begin position="33"/>
        <end position="37"/>
    </location>
</feature>
<feature type="strand" evidence="20">
    <location>
        <begin position="45"/>
        <end position="52"/>
    </location>
</feature>
<feature type="helix" evidence="20">
    <location>
        <begin position="61"/>
        <end position="63"/>
    </location>
</feature>
<feature type="helix" evidence="20">
    <location>
        <begin position="83"/>
        <end position="85"/>
    </location>
</feature>
<feature type="strand" evidence="20">
    <location>
        <begin position="90"/>
        <end position="95"/>
    </location>
</feature>
<feature type="strand" evidence="20">
    <location>
        <begin position="105"/>
        <end position="121"/>
    </location>
</feature>
<feature type="helix" evidence="20">
    <location>
        <begin position="123"/>
        <end position="127"/>
    </location>
</feature>
<feature type="strand" evidence="20">
    <location>
        <begin position="130"/>
        <end position="132"/>
    </location>
</feature>
<feature type="strand" evidence="20">
    <location>
        <begin position="135"/>
        <end position="137"/>
    </location>
</feature>
<feature type="strand" evidence="20">
    <location>
        <begin position="145"/>
        <end position="147"/>
    </location>
</feature>
<feature type="strand" evidence="20">
    <location>
        <begin position="149"/>
        <end position="158"/>
    </location>
</feature>
<feature type="strand" evidence="20">
    <location>
        <begin position="161"/>
        <end position="164"/>
    </location>
</feature>
<feature type="helix" evidence="20">
    <location>
        <begin position="185"/>
        <end position="188"/>
    </location>
</feature>
<feature type="helix" evidence="19">
    <location>
        <begin position="192"/>
        <end position="194"/>
    </location>
</feature>
<feature type="strand" evidence="20">
    <location>
        <begin position="195"/>
        <end position="197"/>
    </location>
</feature>
<feature type="turn" evidence="20">
    <location>
        <begin position="201"/>
        <end position="203"/>
    </location>
</feature>
<feature type="turn" evidence="20">
    <location>
        <begin position="206"/>
        <end position="208"/>
    </location>
</feature>
<feature type="strand" evidence="20">
    <location>
        <begin position="209"/>
        <end position="211"/>
    </location>
</feature>
<feature type="turn" evidence="19">
    <location>
        <begin position="213"/>
        <end position="215"/>
    </location>
</feature>
<feature type="strand" evidence="20">
    <location>
        <begin position="219"/>
        <end position="226"/>
    </location>
</feature>
<feature type="strand" evidence="20">
    <location>
        <begin position="234"/>
        <end position="240"/>
    </location>
</feature>
<feature type="helix" evidence="20">
    <location>
        <begin position="256"/>
        <end position="258"/>
    </location>
</feature>
<feature type="strand" evidence="20">
    <location>
        <begin position="259"/>
        <end position="272"/>
    </location>
</feature>
<feature type="strand" evidence="20">
    <location>
        <begin position="278"/>
        <end position="282"/>
    </location>
</feature>
<feature type="strand" evidence="20">
    <location>
        <begin position="285"/>
        <end position="297"/>
    </location>
</feature>
<feature type="strand" evidence="19">
    <location>
        <begin position="304"/>
        <end position="306"/>
    </location>
</feature>
<feature type="helix" evidence="19">
    <location>
        <begin position="324"/>
        <end position="326"/>
    </location>
</feature>
<feature type="strand" evidence="19">
    <location>
        <begin position="348"/>
        <end position="351"/>
    </location>
</feature>
<feature type="strand" evidence="19">
    <location>
        <begin position="353"/>
        <end position="359"/>
    </location>
</feature>
<comment type="function">
    <text evidence="12 13 18">Forms an icosahedral capsid with a T=7 symmetry and a 40 nm diameter. The capsid is composed of 72 pentamers linked to each other by disulfide bonds and associated with VP2 or VP3 proteins. Binds to N-glycolylneuraminic analog of the ganglioside GM1 on the cell surface to provide virion attachment to target cell (PubMed:18353982). Once attached, the virion is internalized by caveolin-mediated endocytosis and traffics to the endoplasmic reticulum. Inside the endoplasmic reticulum, the protein folding machinery isomerizes VP1 interpentamer disulfide bonds, thereby triggering initial uncoating (PubMed:17981119). Next, the virion uses the endoplasmic reticulum-associated degradation machinery to probably translocate in the cytosol before reaching the nucleus (PubMed:17981119). Nuclear entry of the viral DNA involves the selective exposure and importin recognition of VP2/Vp3 nuclear localization signal. The assembly takes place in the cell nucleus. Encapsulates the genomic DNA and participates in rearranging nucleosomes around the viral DNA. The viral progenies exit the cells by lytic release.</text>
</comment>
<comment type="subunit">
    <text evidence="1 3 4 6 10 16">Homomultimer; disulfide-linked. The virus capsid is composed of 72 icosahedral units, each one composed of five disulfide-linked copies of VP1. Interacts with agnoprotein (By similarity). Interacts with minor capsid proteins VP2 and VP3. Interacts with host HSPA8; this interaction probably participates in virus assembly. Interacts with host SP1; this interaction enhances the efficiency of viral packaging.</text>
</comment>
<comment type="interaction">
    <interactant intactId="EBI-1555770">
        <id>P03087</id>
    </interactant>
    <interactant intactId="EBI-1555770">
        <id>P03087</id>
        <label>-</label>
    </interactant>
    <organismsDiffer>false</organismsDiffer>
    <experiments>3</experiments>
</comment>
<comment type="interaction">
    <interactant intactId="EBI-1555770">
        <id>P03087</id>
    </interactant>
    <interactant intactId="EBI-7196689">
        <id>O92837</id>
        <label>vp3</label>
    </interactant>
    <organismsDiffer>false</organismsDiffer>
    <experiments>3</experiments>
</comment>
<comment type="interaction">
    <interactant intactId="EBI-1555770">
        <id>P03087</id>
    </interactant>
    <interactant intactId="EBI-1555798">
        <id>P03093</id>
    </interactant>
    <organismsDiffer>false</organismsDiffer>
    <experiments>3</experiments>
</comment>
<comment type="interaction">
    <interactant intactId="EBI-1555770">
        <id>P03087</id>
    </interactant>
    <interactant intactId="EBI-642213">
        <id>P11103</id>
        <label>Parp1</label>
    </interactant>
    <organismsDiffer>true</organismsDiffer>
    <experiments>2</experiments>
</comment>
<comment type="subcellular location">
    <subcellularLocation>
        <location evidence="16">Virion</location>
    </subcellularLocation>
    <subcellularLocation>
        <location evidence="5">Host nucleus</location>
    </subcellularLocation>
    <subcellularLocation>
        <location evidence="18">Host endoplasmic reticulum</location>
    </subcellularLocation>
    <text evidence="18">Following host cell entry, the virion enters into the endoplasmic reticulum through a calveolar-dependent pathway. Then, viral DNA is translocated to the nucleus. Shortly after synthesis, a nuclear localization signal directs VP1 to the cell nucleus where virion assembly occurs.</text>
</comment>
<comment type="alternative products">
    <event type="alternative splicing"/>
    <event type="alternative initiation"/>
    <isoform>
        <id>P03087-1</id>
        <name>VP1</name>
        <name>Major capsid protein VP1</name>
        <sequence type="displayed"/>
    </isoform>
    <isoform>
        <id>P03093-1</id>
        <name>VP2</name>
        <name>Minor capsid protein VP2</name>
        <sequence type="external"/>
    </isoform>
    <isoform>
        <id>P03093-2</id>
        <name>VP3</name>
        <name>Minor capsid protein VP3</name>
        <sequence type="external"/>
    </isoform>
    <isoform>
        <id>P03093-3</id>
        <name>VP4</name>
        <name>Viroporin VP4</name>
        <sequence type="external"/>
    </isoform>
    <isoform>
        <id>P03084-1</id>
        <name>Agno</name>
        <sequence type="external"/>
    </isoform>
</comment>
<comment type="domain">
    <text evidence="9 16">The intrinsically disordered C-terminal arm interacts with neighboring pentamers. The unstructured nature of this region allows to make different interactions depending on the structural context: pentamers present at the 12 icosahedral fivefold axes bind five pentamers, whereas pentamers present at the 60 icosahedral six-fold axes interact with six pentamers.</text>
</comment>
<comment type="domain">
    <text evidence="5">A DNA-binding domain overlapping a bipartite nuclear localization signal is present in the N-terminal region of the protein and is required for efficient virus formation.</text>
</comment>
<comment type="miscellaneous">
    <molecule>Isoform VP1</molecule>
    <text>Produced by alternative splicing of the late mRNA (16s mRNA).</text>
</comment>
<comment type="similarity">
    <text evidence="17">Belongs to the polyomaviruses coat protein VP1 family.</text>
</comment>
<comment type="online information" name="Virus Particle ExploreR db">
    <link uri="https://viperdb.org/Info_Page.php?VDB=1sva"/>
    <text>Icosahedral capsid structure</text>
</comment>
<organismHost>
    <name type="scientific">Macaca</name>
    <name type="common">macaques</name>
    <dbReference type="NCBI Taxonomy" id="9539"/>
</organismHost>
<organism>
    <name type="scientific">Simian virus 40</name>
    <name type="common">SV40</name>
    <dbReference type="NCBI Taxonomy" id="1891767"/>
    <lineage>
        <taxon>Viruses</taxon>
        <taxon>Monodnaviria</taxon>
        <taxon>Shotokuvirae</taxon>
        <taxon>Cossaviricota</taxon>
        <taxon>Papovaviricetes</taxon>
        <taxon>Sepolyvirales</taxon>
        <taxon>Polyomaviridae</taxon>
        <taxon>Betapolyomavirus</taxon>
    </lineage>
</organism>
<evidence type="ECO:0000250" key="1"/>
<evidence type="ECO:0000256" key="2">
    <source>
        <dbReference type="SAM" id="MobiDB-lite"/>
    </source>
</evidence>
<evidence type="ECO:0000269" key="3">
    <source>
    </source>
</evidence>
<evidence type="ECO:0000269" key="4">
    <source>
    </source>
</evidence>
<evidence type="ECO:0000269" key="5">
    <source>
    </source>
</evidence>
<evidence type="ECO:0000269" key="6">
    <source>
    </source>
</evidence>
<evidence type="ECO:0000269" key="7">
    <source>
    </source>
</evidence>
<evidence type="ECO:0000269" key="8">
    <source>
    </source>
</evidence>
<evidence type="ECO:0000269" key="9">
    <source>
    </source>
</evidence>
<evidence type="ECO:0000269" key="10">
    <source>
    </source>
</evidence>
<evidence type="ECO:0000269" key="11">
    <source>
    </source>
</evidence>
<evidence type="ECO:0000269" key="12">
    <source>
    </source>
</evidence>
<evidence type="ECO:0000269" key="13">
    <source>
    </source>
</evidence>
<evidence type="ECO:0000269" key="14">
    <source>
    </source>
</evidence>
<evidence type="ECO:0000269" key="15">
    <source>
    </source>
</evidence>
<evidence type="ECO:0000269" key="16">
    <source>
    </source>
</evidence>
<evidence type="ECO:0000305" key="17"/>
<evidence type="ECO:0000305" key="18">
    <source>
    </source>
</evidence>
<evidence type="ECO:0007829" key="19">
    <source>
        <dbReference type="PDB" id="1SVA"/>
    </source>
</evidence>
<evidence type="ECO:0007829" key="20">
    <source>
        <dbReference type="PDB" id="3BWR"/>
    </source>
</evidence>
<accession>P03087</accession>
<protein>
    <recommendedName>
        <fullName>Major capsid protein VP1</fullName>
    </recommendedName>
    <alternativeName>
        <fullName>Major structural protein VP1</fullName>
    </alternativeName>
</protein>
<reference key="1">
    <citation type="journal article" date="1978" name="Science">
        <title>The genome of simian virus 40.</title>
        <authorList>
            <person name="Reddy V.B."/>
            <person name="Thimmappaya B."/>
            <person name="Dhar R."/>
            <person name="Subramanian K.N."/>
            <person name="Zain B.S."/>
            <person name="Pan J."/>
            <person name="Ghosh P.K."/>
            <person name="Celma M.L."/>
            <person name="Weissman S.M."/>
        </authorList>
    </citation>
    <scope>NUCLEOTIDE SEQUENCE [GENOMIC DNA]</scope>
</reference>
<reference key="2">
    <citation type="journal article" date="1978" name="Nature">
        <title>Complete nucleotide sequence of SV40 DNA.</title>
        <authorList>
            <person name="Fiers W."/>
            <person name="Contreras R."/>
            <person name="Haegeman G."/>
            <person name="Rogiers R."/>
            <person name="van de Voorde A."/>
            <person name="van Heuverswyn H."/>
            <person name="van Herreweghe J."/>
            <person name="Volckaert G."/>
            <person name="Ysebaert M."/>
        </authorList>
    </citation>
    <scope>NUCLEOTIDE SEQUENCE [GENOMIC DNA]</scope>
    <source>
        <strain>776</strain>
    </source>
</reference>
<reference key="3">
    <citation type="journal article" date="1979" name="J. Biol. Chem.">
        <title>Correlation of the protein and nucleic acid sequences for the major structural protein of simian virus 40.</title>
        <authorList>
            <person name="Kempe T.D."/>
            <person name="Beattie W.G."/>
            <person name="Weissman S."/>
            <person name="Konigsberg W."/>
        </authorList>
    </citation>
    <scope>PROTEIN SEQUENCE</scope>
</reference>
<reference key="4">
    <citation type="journal article" date="1963" name="J. Cell Biol.">
        <title>An electron microscope study of the development of SV40 virus.</title>
        <authorList>
            <person name="Granboulan N."/>
            <person name="Tournier P."/>
            <person name="Wicker R."/>
            <person name="Bernhard W."/>
        </authorList>
    </citation>
    <scope>VIRION ASSEMBLY</scope>
</reference>
<reference key="5">
    <citation type="journal article" date="1989" name="J. Biol. Chem.">
        <title>Epitopes on the major capsid protein of simian virus 40.</title>
        <authorList>
            <person name="Babe L.M."/>
            <person name="Brew K."/>
            <person name="Matsuura S.E."/>
            <person name="Scott W.A."/>
        </authorList>
    </citation>
    <scope>PHOSPHORYLATION AT THR-338</scope>
</reference>
<reference key="6">
    <citation type="journal article" date="1996" name="J. Virol.">
        <title>Analysis of a nuclear localization signal of simian virus 40 major capsid protein Vp1.</title>
        <authorList>
            <person name="Ishii N."/>
            <person name="Minami N."/>
            <person name="Chen E.Y."/>
            <person name="Medina A.L."/>
            <person name="Chico M.M."/>
            <person name="Kasamatsu H."/>
        </authorList>
    </citation>
    <scope>NUCLEAR LOCALIZATION SIGNAL</scope>
</reference>
<reference key="7">
    <citation type="journal article" date="1999" name="J. Gen. Virol.">
        <title>Cys9, Cys104 and Cys207 of simian virus 40 Vp1 are essential for inter-pentamer disulfide-linkage and stabilization in cell-free lysates.</title>
        <authorList>
            <person name="Jao C.C."/>
            <person name="Weidman M.K."/>
            <person name="Perez A.R."/>
            <person name="Gharakhanian E."/>
        </authorList>
    </citation>
    <scope>DISULFIDE BONDS IN INTER-PENTAMER</scope>
</reference>
<reference key="8">
    <citation type="journal article" date="2000" name="Cell Stress Chaperones">
        <title>HSC70 interactions with SV40 viral proteins differ between permissive and nonpermissive mammalian cells.</title>
        <authorList>
            <person name="Sainis L."/>
            <person name="Angelidis C."/>
            <person name="Pagoulatos G.N."/>
            <person name="Lazaridis L."/>
        </authorList>
    </citation>
    <scope>INTERACTION WITH HOST HSPA8</scope>
</reference>
<reference key="9">
    <citation type="journal article" date="2001" name="J. Virol.">
        <title>Simian virus 40 Vp1 DNA-binding domain is functionally separable from the overlapping nuclear localization signal and is required for effective virion formation and full viability.</title>
        <authorList>
            <person name="Li P.P."/>
            <person name="Nakanishi A."/>
            <person name="Shum D."/>
            <person name="Sun P.C."/>
            <person name="Salazar A.M."/>
            <person name="Fernandez C.F."/>
            <person name="Chan S.W."/>
            <person name="Kasamatsu H."/>
        </authorList>
    </citation>
    <scope>DNA-BINDING</scope>
    <scope>NUCLEAR LOCALIZATION SIGNAL</scope>
    <scope>SUBCELLULAR LOCATION</scope>
</reference>
<reference key="10">
    <citation type="journal article" date="2002" name="J. Virol.">
        <title>Cellular transcription factor Sp1 recruits simian virus 40 capsid proteins to the viral packaging signal, ses.</title>
        <authorList>
            <person name="Gordon-Shaag A."/>
            <person name="Ben-Nun-Shaul O."/>
            <person name="Roitman V."/>
            <person name="Yosef Y."/>
            <person name="Oppenheim A."/>
        </authorList>
    </citation>
    <scope>INTERACTION WITH HOST SP1</scope>
</reference>
<reference key="11">
    <citation type="journal article" date="2003" name="J. Virol.">
        <title>Importance of Vp1 calcium-binding residues in assembly, cell entry, and nuclear entry of simian virus 40.</title>
        <authorList>
            <person name="Li P.P."/>
            <person name="Naknanishi A."/>
            <person name="Tran M.A."/>
            <person name="Ishizu K."/>
            <person name="Kawano M."/>
            <person name="Phillips M."/>
            <person name="Handa H."/>
            <person name="Liddington R.C."/>
            <person name="Kasamatsu H."/>
        </authorList>
    </citation>
    <scope>MUTAGENESIS OF GLU-49; GLU-217 AND GLU-331</scope>
</reference>
<reference key="12">
    <citation type="journal article" date="2005" name="Virus Res.">
        <title>Cys254 and Cys49/Cys87of simian virus 40 Vp1 are essential in formation of infectious virions.</title>
        <authorList>
            <person name="Gharakhanian E."/>
            <person name="Mana W."/>
            <person name="Norng M."/>
        </authorList>
    </citation>
    <scope>MUTAGENESIS OF CYS-50; CYS-88; CYS-255 AND CYS-268</scope>
</reference>
<reference key="13">
    <citation type="journal article" date="2006" name="J. Virol.">
        <title>Identification of amino acid residues within simian virus 40 capsid proteins Vp1, Vp2, and Vp3 that are required for their interaction and for viral infection.</title>
        <authorList>
            <person name="Nakanishi A."/>
            <person name="Nakamura A."/>
            <person name="Liddington R."/>
            <person name="Kasamatsu H."/>
        </authorList>
    </citation>
    <scope>INTERACTION WITH VP2 AND VP3</scope>
    <scope>MUTAGENESIS OF VAL-244 AND LEU-246</scope>
</reference>
<reference key="14">
    <citation type="journal article" date="2007" name="J. Virol.">
        <title>Importance of calcium-binding site 2 in simian virus 40 infection.</title>
        <authorList>
            <person name="Li P.P."/>
            <person name="Nguyen A.P."/>
            <person name="Qu Q."/>
            <person name="Jafri Q.H."/>
            <person name="Aungsumart S."/>
            <person name="Cheng R.H."/>
            <person name="Kasamatsu H."/>
        </authorList>
    </citation>
    <scope>MUTAGENESIS OF GLU-158 AND GLU-161</scope>
</reference>
<reference key="15">
    <citation type="journal article" date="2007" name="Cell">
        <title>Simian Virus 40 depends on ER protein folding and quality control factors for entry into host cells.</title>
        <authorList>
            <person name="Schelhaas M."/>
            <person name="Malmstroem J."/>
            <person name="Pelkmans L."/>
            <person name="Haugstetter J."/>
            <person name="Ellgaard L."/>
            <person name="Gruenewald K."/>
            <person name="Helenius A."/>
        </authorList>
    </citation>
    <scope>ISOMERIZATION OF DISULFIDE BONDS</scope>
    <scope>FUNCTION</scope>
</reference>
<reference key="16">
    <citation type="journal article" date="2009" name="Virology">
        <title>The Polyomaviridae: Contributions of virus structure to our understanding of virus receptors and infectious entry.</title>
        <authorList>
            <person name="Neu U."/>
            <person name="Stehle T."/>
            <person name="Atwood W.J."/>
        </authorList>
    </citation>
    <scope>REVIEW</scope>
</reference>
<reference key="17">
    <citation type="journal article" date="1991" name="Nature">
        <title>Structure of simian virus 40 at 3.8-A resolution.</title>
        <authorList>
            <person name="Liddinngton R.C."/>
            <person name="Yan Y."/>
            <person name="Moulai J."/>
            <person name="Sahli R."/>
            <person name="Benjamin T.L."/>
            <person name="Harrison S.C."/>
        </authorList>
    </citation>
    <scope>X-RAY CRYSTALLOGRAPHY (3.8 ANGSTROMS)</scope>
</reference>
<reference key="18">
    <citation type="journal article" date="1996" name="Structure">
        <title>The structure of simian virus 40 refined at 3.1-A resolution.</title>
        <authorList>
            <person name="Stehle T."/>
            <person name="Gamblin S.J."/>
            <person name="Yan Y."/>
            <person name="Harrison S.C."/>
        </authorList>
    </citation>
    <scope>X-RAY CRYSTALLOGRAPHY (3.1 ANGSTROMS) OF 2-362</scope>
    <scope>SUBUNIT</scope>
    <scope>SUBCELLULAR LOCATION</scope>
</reference>
<reference key="19">
    <citation type="journal article" date="2008" name="Proc. Natl. Acad. Sci. U.S.A.">
        <title>Structural basis of GM1 ganglioside recognition by simian virus 40.</title>
        <authorList>
            <person name="Neu U."/>
            <person name="Woellner K."/>
            <person name="Gauglitz G."/>
            <person name="Stehle T."/>
        </authorList>
    </citation>
    <scope>X-RAY CRYSTALLOGRAPHY (2.25 ANGSTROMS) OF 31-298</scope>
    <scope>FUNCTION</scope>
</reference>
<dbReference type="EMBL" id="J02400">
    <property type="protein sequence ID" value="AAB59923.1"/>
    <property type="molecule type" value="Genomic_DNA"/>
</dbReference>
<dbReference type="PIR" id="A31426">
    <property type="entry name" value="A31426"/>
</dbReference>
<dbReference type="PIR" id="E03631">
    <property type="entry name" value="VVVP14"/>
</dbReference>
<dbReference type="RefSeq" id="YP_003708381.1">
    <property type="nucleotide sequence ID" value="NC_001669.1"/>
</dbReference>
<dbReference type="PDB" id="1SVA">
    <property type="method" value="X-ray"/>
    <property type="resolution" value="3.10 A"/>
    <property type="chains" value="1/2/3/4/5/6=2-362"/>
</dbReference>
<dbReference type="PDB" id="3BWQ">
    <property type="method" value="X-ray"/>
    <property type="resolution" value="2.30 A"/>
    <property type="chains" value="A/B/C/D/E=31-298"/>
</dbReference>
<dbReference type="PDB" id="3BWR">
    <property type="method" value="X-ray"/>
    <property type="resolution" value="2.25 A"/>
    <property type="chains" value="A/B/C/D/E=31-298"/>
</dbReference>
<dbReference type="PDBsum" id="1SVA"/>
<dbReference type="PDBsum" id="3BWQ"/>
<dbReference type="PDBsum" id="3BWR"/>
<dbReference type="SMR" id="P03087"/>
<dbReference type="DIP" id="DIP-29870N"/>
<dbReference type="IntAct" id="P03087">
    <property type="interactions" value="3"/>
</dbReference>
<dbReference type="MINT" id="P03087"/>
<dbReference type="UniLectin" id="P03087"/>
<dbReference type="iPTMnet" id="P03087"/>
<dbReference type="OrthoDB" id="12524at10239"/>
<dbReference type="EvolutionaryTrace" id="P03087"/>
<dbReference type="Proteomes" id="UP000007705">
    <property type="component" value="Genome"/>
</dbReference>
<dbReference type="GO" id="GO:0046727">
    <property type="term" value="C:capsomere"/>
    <property type="evidence" value="ECO:0000314"/>
    <property type="project" value="CAFA"/>
</dbReference>
<dbReference type="GO" id="GO:0044165">
    <property type="term" value="C:host cell endoplasmic reticulum"/>
    <property type="evidence" value="ECO:0007669"/>
    <property type="project" value="UniProtKB-SubCell"/>
</dbReference>
<dbReference type="GO" id="GO:0042025">
    <property type="term" value="C:host cell nucleus"/>
    <property type="evidence" value="ECO:0007669"/>
    <property type="project" value="UniProtKB-SubCell"/>
</dbReference>
<dbReference type="GO" id="GO:0039620">
    <property type="term" value="C:T=7 icosahedral viral capsid"/>
    <property type="evidence" value="ECO:0007669"/>
    <property type="project" value="UniProtKB-KW"/>
</dbReference>
<dbReference type="GO" id="GO:0042802">
    <property type="term" value="F:identical protein binding"/>
    <property type="evidence" value="ECO:0000314"/>
    <property type="project" value="CAFA"/>
</dbReference>
<dbReference type="GO" id="GO:0060090">
    <property type="term" value="F:molecular adaptor activity"/>
    <property type="evidence" value="ECO:0000314"/>
    <property type="project" value="DisProt"/>
</dbReference>
<dbReference type="GO" id="GO:0005198">
    <property type="term" value="F:structural molecule activity"/>
    <property type="evidence" value="ECO:0007669"/>
    <property type="project" value="InterPro"/>
</dbReference>
<dbReference type="GO" id="GO:0075513">
    <property type="term" value="P:caveolin-mediated endocytosis of virus by host cell"/>
    <property type="evidence" value="ECO:0007669"/>
    <property type="project" value="UniProtKB-KW"/>
</dbReference>
<dbReference type="GO" id="GO:0052025">
    <property type="term" value="P:symbiont-mediated perturbation of host cell endomembrane system"/>
    <property type="evidence" value="ECO:0000269"/>
    <property type="project" value="SigSci"/>
</dbReference>
<dbReference type="GO" id="GO:0019069">
    <property type="term" value="P:viral capsid assembly"/>
    <property type="evidence" value="ECO:0000314"/>
    <property type="project" value="CAFA"/>
</dbReference>
<dbReference type="GO" id="GO:0019062">
    <property type="term" value="P:virion attachment to host cell"/>
    <property type="evidence" value="ECO:0007669"/>
    <property type="project" value="UniProtKB-KW"/>
</dbReference>
<dbReference type="DisProt" id="DP00182"/>
<dbReference type="Gene3D" id="2.60.175.10">
    <property type="entry name" value="Capsid protein VP1,Polyomavirus"/>
    <property type="match status" value="1"/>
</dbReference>
<dbReference type="InterPro" id="IPR000662">
    <property type="entry name" value="Capsid_VP1_Polyomavir"/>
</dbReference>
<dbReference type="InterPro" id="IPR011222">
    <property type="entry name" value="dsDNA_vir_gr_I_capsid"/>
</dbReference>
<dbReference type="InterPro" id="IPR036931">
    <property type="entry name" value="Polyomavir_VP1_sf"/>
</dbReference>
<dbReference type="Pfam" id="PF00718">
    <property type="entry name" value="Polyoma_coat"/>
    <property type="match status" value="1"/>
</dbReference>
<dbReference type="PIRSF" id="PIRSF003376">
    <property type="entry name" value="Capsid_VP1_Polyomavir"/>
    <property type="match status" value="1"/>
</dbReference>
<dbReference type="SUPFAM" id="SSF88648">
    <property type="entry name" value="Group I dsDNA viruses"/>
    <property type="match status" value="1"/>
</dbReference>
<keyword id="KW-0002">3D-structure</keyword>
<keyword id="KW-0024">Alternative initiation</keyword>
<keyword id="KW-0025">Alternative splicing</keyword>
<keyword id="KW-0167">Capsid protein</keyword>
<keyword id="KW-1166">Caveolin-mediated endocytosis of virus by host</keyword>
<keyword id="KW-0903">Direct protein sequencing</keyword>
<keyword id="KW-1015">Disulfide bond</keyword>
<keyword id="KW-1038">Host endoplasmic reticulum</keyword>
<keyword id="KW-1048">Host nucleus</keyword>
<keyword id="KW-0945">Host-virus interaction</keyword>
<keyword id="KW-0426">Late protein</keyword>
<keyword id="KW-0597">Phosphoprotein</keyword>
<keyword id="KW-1185">Reference proteome</keyword>
<keyword id="KW-1145">T=7 icosahedral capsid protein</keyword>
<keyword id="KW-1161">Viral attachment to host cell</keyword>
<keyword id="KW-1162">Viral penetration into host cytoplasm</keyword>
<keyword id="KW-0946">Virion</keyword>
<keyword id="KW-1164">Virus endocytosis by host</keyword>
<keyword id="KW-1160">Virus entry into host cell</keyword>
<sequence length="362" mass="39906">MAPTKRKGSCPGAAPKKPKEPVQVPKLVIKGGIEVLGVKTGVDSFTEVECFLNPQMGNPDEHQKGLSKSLAAEKQFTDDSPDKEQLPCYSVARIPLPNINEDLTCGNILMWEAVTVKTEVIGVTAMLNLHSGTQKTHENGAGKPIQGSNFHFFAVGGEPLELQGVLANYRTKYPAQTVTPKNATVDSQQMNTDHKAVLDKDNAYPVECWVPDPSKNENTRYFGTYTGGENVPPVLHITNTATTVLLDEQGVGPLCKADSLYVSAVDICGLFTNTSGTQQWKGLPRYFKITLRKRSVKNPYPISFLLSDLINRRTQRVDGQPMIGMSSQVEEVRVYEDTEELPGDPDMIRYIDEFGQTTTRMQ</sequence>